<organism>
    <name type="scientific">Saccharomyces cerevisiae (strain ATCC 204508 / S288c)</name>
    <name type="common">Baker's yeast</name>
    <dbReference type="NCBI Taxonomy" id="559292"/>
    <lineage>
        <taxon>Eukaryota</taxon>
        <taxon>Fungi</taxon>
        <taxon>Dikarya</taxon>
        <taxon>Ascomycota</taxon>
        <taxon>Saccharomycotina</taxon>
        <taxon>Saccharomycetes</taxon>
        <taxon>Saccharomycetales</taxon>
        <taxon>Saccharomycetaceae</taxon>
        <taxon>Saccharomyces</taxon>
    </lineage>
</organism>
<name>YL407_YEAST</name>
<sequence>MTVSTSKTPKKNIKYTLTHTLQKWKETLKKITHETLSSIDDSSGSDEKIEALFTVSQPAVVASKGIDRDSGASMSQVGGGVNSTLEMKLTDESEESSSANNTTTTASHTLSNSKKSTQNFENYNVVEERIKLAQKSKAPFCNAEKIWKRRRQLWTQPTEQSESANNDGVTRREIFQAIPQEYYARVYKKLVVDDKPLREPLNLEDALQVINAGWTETRKWANAAKGMP</sequence>
<proteinExistence type="evidence at protein level"/>
<comment type="function">
    <text>Deletion results in antifungal drug fluconazole-resistant phenotype.</text>
</comment>
<comment type="interaction">
    <interactant intactId="EBI-31630">
        <id>Q06070</id>
    </interactant>
    <interactant intactId="EBI-9548">
        <id>P19454</id>
        <label>CKA2</label>
    </interactant>
    <organismsDiffer>false</organismsDiffer>
    <experiments>4</experiments>
</comment>
<comment type="subcellular location">
    <subcellularLocation>
        <location evidence="2">Cytoplasm</location>
        <location evidence="2">Cell cortex</location>
    </subcellularLocation>
</comment>
<comment type="miscellaneous">
    <text evidence="3">Present with 3140 molecules/cell in log phase SD medium.</text>
</comment>
<accession>Q06070</accession>
<accession>D6VZ41</accession>
<protein>
    <recommendedName>
        <fullName>Uncharacterized protein YLR407W</fullName>
    </recommendedName>
</protein>
<dbReference type="EMBL" id="U19729">
    <property type="protein sequence ID" value="AAB82340.1"/>
    <property type="molecule type" value="Genomic_DNA"/>
</dbReference>
<dbReference type="EMBL" id="BK006945">
    <property type="protein sequence ID" value="DAA09707.2"/>
    <property type="molecule type" value="Genomic_DNA"/>
</dbReference>
<dbReference type="PIR" id="S55963">
    <property type="entry name" value="S55963"/>
</dbReference>
<dbReference type="SMR" id="Q06070"/>
<dbReference type="BioGRID" id="31664">
    <property type="interactions" value="97"/>
</dbReference>
<dbReference type="FunCoup" id="Q06070">
    <property type="interactions" value="42"/>
</dbReference>
<dbReference type="IntAct" id="Q06070">
    <property type="interactions" value="3"/>
</dbReference>
<dbReference type="MINT" id="Q06070"/>
<dbReference type="STRING" id="4932.YLR407W"/>
<dbReference type="iPTMnet" id="Q06070"/>
<dbReference type="PaxDb" id="4932-YLR407W"/>
<dbReference type="PeptideAtlas" id="Q06070"/>
<dbReference type="EnsemblFungi" id="YLR407W_mRNA">
    <property type="protein sequence ID" value="YLR407W"/>
    <property type="gene ID" value="YLR407W"/>
</dbReference>
<dbReference type="KEGG" id="sce:YLR407W"/>
<dbReference type="AGR" id="SGD:S000004399"/>
<dbReference type="SGD" id="S000004399">
    <property type="gene designation" value="YLR407W"/>
</dbReference>
<dbReference type="VEuPathDB" id="FungiDB:YLR407W"/>
<dbReference type="eggNOG" id="ENOG502S6I5">
    <property type="taxonomic scope" value="Eukaryota"/>
</dbReference>
<dbReference type="HOGENOM" id="CLU_092540_0_0_1"/>
<dbReference type="InParanoid" id="Q06070"/>
<dbReference type="OMA" id="WTETRKW"/>
<dbReference type="OrthoDB" id="5576875at2759"/>
<dbReference type="BioCyc" id="YEAST:G3O-32469-MONOMER"/>
<dbReference type="BioGRID-ORCS" id="851123">
    <property type="hits" value="1 hit in 10 CRISPR screens"/>
</dbReference>
<dbReference type="PRO" id="PR:Q06070"/>
<dbReference type="Proteomes" id="UP000002311">
    <property type="component" value="Chromosome XII"/>
</dbReference>
<dbReference type="RNAct" id="Q06070">
    <property type="molecule type" value="protein"/>
</dbReference>
<dbReference type="GO" id="GO:0005938">
    <property type="term" value="C:cell cortex"/>
    <property type="evidence" value="ECO:0007669"/>
    <property type="project" value="UniProtKB-SubCell"/>
</dbReference>
<dbReference type="InterPro" id="IPR053274">
    <property type="entry name" value="Fluconazole_resistance"/>
</dbReference>
<dbReference type="InterPro" id="IPR025124">
    <property type="entry name" value="Gag1-like_clamp"/>
</dbReference>
<dbReference type="InterPro" id="IPR053969">
    <property type="entry name" value="Lock_Gag1-like"/>
</dbReference>
<dbReference type="PANTHER" id="PTHR28065:SF1">
    <property type="entry name" value="DUF4050 DOMAIN-CONTAINING PROTEIN"/>
    <property type="match status" value="1"/>
</dbReference>
<dbReference type="PANTHER" id="PTHR28065">
    <property type="entry name" value="FREQUENIN"/>
    <property type="match status" value="1"/>
</dbReference>
<dbReference type="Pfam" id="PF13259">
    <property type="entry name" value="clamp_Gag1-like"/>
    <property type="match status" value="1"/>
</dbReference>
<dbReference type="Pfam" id="PF22991">
    <property type="entry name" value="Lock_Gag1-like"/>
    <property type="match status" value="1"/>
</dbReference>
<evidence type="ECO:0000256" key="1">
    <source>
        <dbReference type="SAM" id="MobiDB-lite"/>
    </source>
</evidence>
<evidence type="ECO:0000269" key="2">
    <source>
    </source>
</evidence>
<evidence type="ECO:0000269" key="3">
    <source>
    </source>
</evidence>
<evidence type="ECO:0000305" key="4"/>
<keyword id="KW-0963">Cytoplasm</keyword>
<keyword id="KW-1185">Reference proteome</keyword>
<gene>
    <name type="ordered locus">YLR407W</name>
</gene>
<feature type="chain" id="PRO_0000268628" description="Uncharacterized protein YLR407W">
    <location>
        <begin position="1"/>
        <end position="228"/>
    </location>
</feature>
<feature type="region of interest" description="Disordered" evidence="1">
    <location>
        <begin position="90"/>
        <end position="115"/>
    </location>
</feature>
<feature type="compositionally biased region" description="Low complexity" evidence="1">
    <location>
        <begin position="96"/>
        <end position="113"/>
    </location>
</feature>
<feature type="sequence conflict" description="In Ref. 1; AAB82340." evidence="4" ref="1">
    <original>GMP</original>
    <variation>ACHD</variation>
    <location>
        <begin position="226"/>
        <end position="228"/>
    </location>
</feature>
<reference key="1">
    <citation type="journal article" date="1997" name="Nature">
        <title>The nucleotide sequence of Saccharomyces cerevisiae chromosome XII.</title>
        <authorList>
            <person name="Johnston M."/>
            <person name="Hillier L.W."/>
            <person name="Riles L."/>
            <person name="Albermann K."/>
            <person name="Andre B."/>
            <person name="Ansorge W."/>
            <person name="Benes V."/>
            <person name="Brueckner M."/>
            <person name="Delius H."/>
            <person name="Dubois E."/>
            <person name="Duesterhoeft A."/>
            <person name="Entian K.-D."/>
            <person name="Floeth M."/>
            <person name="Goffeau A."/>
            <person name="Hebling U."/>
            <person name="Heumann K."/>
            <person name="Heuss-Neitzel D."/>
            <person name="Hilbert H."/>
            <person name="Hilger F."/>
            <person name="Kleine K."/>
            <person name="Koetter P."/>
            <person name="Louis E.J."/>
            <person name="Messenguy F."/>
            <person name="Mewes H.-W."/>
            <person name="Miosga T."/>
            <person name="Moestl D."/>
            <person name="Mueller-Auer S."/>
            <person name="Nentwich U."/>
            <person name="Obermaier B."/>
            <person name="Piravandi E."/>
            <person name="Pohl T.M."/>
            <person name="Portetelle D."/>
            <person name="Purnelle B."/>
            <person name="Rechmann S."/>
            <person name="Rieger M."/>
            <person name="Rinke M."/>
            <person name="Rose M."/>
            <person name="Scharfe M."/>
            <person name="Scherens B."/>
            <person name="Scholler P."/>
            <person name="Schwager C."/>
            <person name="Schwarz S."/>
            <person name="Underwood A.P."/>
            <person name="Urrestarazu L.A."/>
            <person name="Vandenbol M."/>
            <person name="Verhasselt P."/>
            <person name="Vierendeels F."/>
            <person name="Voet M."/>
            <person name="Volckaert G."/>
            <person name="Voss H."/>
            <person name="Wambutt R."/>
            <person name="Wedler E."/>
            <person name="Wedler H."/>
            <person name="Zimmermann F.K."/>
            <person name="Zollner A."/>
            <person name="Hani J."/>
            <person name="Hoheisel J.D."/>
        </authorList>
    </citation>
    <scope>NUCLEOTIDE SEQUENCE [LARGE SCALE GENOMIC DNA]</scope>
    <source>
        <strain>ATCC 204508 / S288c</strain>
    </source>
</reference>
<reference key="2">
    <citation type="journal article" date="2014" name="G3 (Bethesda)">
        <title>The reference genome sequence of Saccharomyces cerevisiae: Then and now.</title>
        <authorList>
            <person name="Engel S.R."/>
            <person name="Dietrich F.S."/>
            <person name="Fisk D.G."/>
            <person name="Binkley G."/>
            <person name="Balakrishnan R."/>
            <person name="Costanzo M.C."/>
            <person name="Dwight S.S."/>
            <person name="Hitz B.C."/>
            <person name="Karra K."/>
            <person name="Nash R.S."/>
            <person name="Weng S."/>
            <person name="Wong E.D."/>
            <person name="Lloyd P."/>
            <person name="Skrzypek M.S."/>
            <person name="Miyasato S.R."/>
            <person name="Simison M."/>
            <person name="Cherry J.M."/>
        </authorList>
    </citation>
    <scope>GENOME REANNOTATION</scope>
    <scope>SEQUENCE REVISION TO 226-228</scope>
    <source>
        <strain>ATCC 204508 / S288c</strain>
    </source>
</reference>
<reference key="3">
    <citation type="journal article" date="2003" name="Genetics">
        <title>Mode of selection and experimental evolution of antifungal drug resistance in Saccharomyces cerevisiae.</title>
        <authorList>
            <person name="Anderson J.B."/>
            <person name="Sirjusingh C."/>
            <person name="Parsons A.B."/>
            <person name="Boone C."/>
            <person name="Wickens C."/>
            <person name="Cowen L.E."/>
            <person name="Kohn L.M."/>
        </authorList>
    </citation>
    <scope>POSSIBLE FUNCTION</scope>
</reference>
<reference key="4">
    <citation type="journal article" date="2003" name="Nature">
        <title>Global analysis of protein localization in budding yeast.</title>
        <authorList>
            <person name="Huh W.-K."/>
            <person name="Falvo J.V."/>
            <person name="Gerke L.C."/>
            <person name="Carroll A.S."/>
            <person name="Howson R.W."/>
            <person name="Weissman J.S."/>
            <person name="O'Shea E.K."/>
        </authorList>
    </citation>
    <scope>SUBCELLULAR LOCATION [LARGE SCALE ANALYSIS]</scope>
</reference>
<reference key="5">
    <citation type="journal article" date="2003" name="Nature">
        <title>Global analysis of protein expression in yeast.</title>
        <authorList>
            <person name="Ghaemmaghami S."/>
            <person name="Huh W.-K."/>
            <person name="Bower K."/>
            <person name="Howson R.W."/>
            <person name="Belle A."/>
            <person name="Dephoure N."/>
            <person name="O'Shea E.K."/>
            <person name="Weissman J.S."/>
        </authorList>
    </citation>
    <scope>LEVEL OF PROTEIN EXPRESSION [LARGE SCALE ANALYSIS]</scope>
</reference>
<reference key="6">
    <citation type="journal article" date="2008" name="Mol. Cell. Proteomics">
        <title>A multidimensional chromatography technology for in-depth phosphoproteome analysis.</title>
        <authorList>
            <person name="Albuquerque C.P."/>
            <person name="Smolka M.B."/>
            <person name="Payne S.H."/>
            <person name="Bafna V."/>
            <person name="Eng J."/>
            <person name="Zhou H."/>
        </authorList>
    </citation>
    <scope>IDENTIFICATION BY MASS SPECTROMETRY [LARGE SCALE ANALYSIS]</scope>
</reference>
<reference key="7">
    <citation type="journal article" date="2009" name="Science">
        <title>Global analysis of Cdk1 substrate phosphorylation sites provides insights into evolution.</title>
        <authorList>
            <person name="Holt L.J."/>
            <person name="Tuch B.B."/>
            <person name="Villen J."/>
            <person name="Johnson A.D."/>
            <person name="Gygi S.P."/>
            <person name="Morgan D.O."/>
        </authorList>
    </citation>
    <scope>IDENTIFICATION BY MASS SPECTROMETRY [LARGE SCALE ANALYSIS]</scope>
</reference>